<organism>
    <name type="scientific">Pseudomonas aeruginosa (strain ATCC 15692 / DSM 22644 / CIP 104116 / JCM 14847 / LMG 12228 / 1C / PRS 101 / PAO1)</name>
    <dbReference type="NCBI Taxonomy" id="208964"/>
    <lineage>
        <taxon>Bacteria</taxon>
        <taxon>Pseudomonadati</taxon>
        <taxon>Pseudomonadota</taxon>
        <taxon>Gammaproteobacteria</taxon>
        <taxon>Pseudomonadales</taxon>
        <taxon>Pseudomonadaceae</taxon>
        <taxon>Pseudomonas</taxon>
    </lineage>
</organism>
<dbReference type="EC" id="4.2.1.2" evidence="1 2"/>
<dbReference type="EMBL" id="U59458">
    <property type="protein sequence ID" value="AAB02830.1"/>
    <property type="molecule type" value="Genomic_DNA"/>
</dbReference>
<dbReference type="EMBL" id="U72494">
    <property type="protein sequence ID" value="AAB17389.1"/>
    <property type="status" value="ALT_INIT"/>
    <property type="molecule type" value="Genomic_DNA"/>
</dbReference>
<dbReference type="EMBL" id="AE004091">
    <property type="protein sequence ID" value="AAG07858.1"/>
    <property type="molecule type" value="Genomic_DNA"/>
</dbReference>
<dbReference type="PIR" id="F83088">
    <property type="entry name" value="F83088"/>
</dbReference>
<dbReference type="PIR" id="JC4982">
    <property type="entry name" value="JC4982"/>
</dbReference>
<dbReference type="SMR" id="Q51404"/>
<dbReference type="STRING" id="208964.PA4470"/>
<dbReference type="PaxDb" id="208964-PA4470"/>
<dbReference type="KEGG" id="pae:PA4470"/>
<dbReference type="PATRIC" id="fig|208964.12.peg.4680"/>
<dbReference type="PseudoCAP" id="PA4470"/>
<dbReference type="HOGENOM" id="CLU_021594_4_1_6"/>
<dbReference type="InParanoid" id="Q51404"/>
<dbReference type="OrthoDB" id="9802809at2"/>
<dbReference type="PhylomeDB" id="Q51404"/>
<dbReference type="BioCyc" id="PAER208964:G1FZ6-4559-MONOMER"/>
<dbReference type="UniPathway" id="UPA00223">
    <property type="reaction ID" value="UER01007"/>
</dbReference>
<dbReference type="Proteomes" id="UP000002438">
    <property type="component" value="Chromosome"/>
</dbReference>
<dbReference type="GO" id="GO:0005737">
    <property type="term" value="C:cytoplasm"/>
    <property type="evidence" value="ECO:0007669"/>
    <property type="project" value="UniProtKB-SubCell"/>
</dbReference>
<dbReference type="GO" id="GO:0004333">
    <property type="term" value="F:fumarate hydratase activity"/>
    <property type="evidence" value="ECO:0000314"/>
    <property type="project" value="PseudoCAP"/>
</dbReference>
<dbReference type="GO" id="GO:0010106">
    <property type="term" value="P:cellular response to iron ion starvation"/>
    <property type="evidence" value="ECO:0000314"/>
    <property type="project" value="PseudoCAP"/>
</dbReference>
<dbReference type="GO" id="GO:0006106">
    <property type="term" value="P:fumarate metabolic process"/>
    <property type="evidence" value="ECO:0007669"/>
    <property type="project" value="InterPro"/>
</dbReference>
<dbReference type="GO" id="GO:0006099">
    <property type="term" value="P:tricarboxylic acid cycle"/>
    <property type="evidence" value="ECO:0007669"/>
    <property type="project" value="UniProtKB-UniRule"/>
</dbReference>
<dbReference type="CDD" id="cd01362">
    <property type="entry name" value="Fumarase_classII"/>
    <property type="match status" value="1"/>
</dbReference>
<dbReference type="FunFam" id="1.10.40.30:FF:000002">
    <property type="entry name" value="Fumarate hydratase class II"/>
    <property type="match status" value="1"/>
</dbReference>
<dbReference type="FunFam" id="1.10.275.10:FF:000001">
    <property type="entry name" value="Fumarate hydratase, mitochondrial"/>
    <property type="match status" value="1"/>
</dbReference>
<dbReference type="FunFam" id="1.20.200.10:FF:000001">
    <property type="entry name" value="Fumarate hydratase, mitochondrial"/>
    <property type="match status" value="1"/>
</dbReference>
<dbReference type="Gene3D" id="1.10.40.30">
    <property type="entry name" value="Fumarase/aspartase (C-terminal domain)"/>
    <property type="match status" value="1"/>
</dbReference>
<dbReference type="Gene3D" id="1.20.200.10">
    <property type="entry name" value="Fumarase/aspartase (Central domain)"/>
    <property type="match status" value="1"/>
</dbReference>
<dbReference type="Gene3D" id="1.10.275.10">
    <property type="entry name" value="Fumarase/aspartase (N-terminal domain)"/>
    <property type="match status" value="1"/>
</dbReference>
<dbReference type="HAMAP" id="MF_00743">
    <property type="entry name" value="FumaraseC"/>
    <property type="match status" value="1"/>
</dbReference>
<dbReference type="InterPro" id="IPR005677">
    <property type="entry name" value="Fum_hydII"/>
</dbReference>
<dbReference type="InterPro" id="IPR024083">
    <property type="entry name" value="Fumarase/histidase_N"/>
</dbReference>
<dbReference type="InterPro" id="IPR018951">
    <property type="entry name" value="Fumarase_C_C"/>
</dbReference>
<dbReference type="InterPro" id="IPR020557">
    <property type="entry name" value="Fumarate_lyase_CS"/>
</dbReference>
<dbReference type="InterPro" id="IPR000362">
    <property type="entry name" value="Fumarate_lyase_fam"/>
</dbReference>
<dbReference type="InterPro" id="IPR022761">
    <property type="entry name" value="Fumarate_lyase_N"/>
</dbReference>
<dbReference type="InterPro" id="IPR008948">
    <property type="entry name" value="L-Aspartase-like"/>
</dbReference>
<dbReference type="PANTHER" id="PTHR11444">
    <property type="entry name" value="ASPARTATEAMMONIA/ARGININOSUCCINATE/ADENYLOSUCCINATE LYASE"/>
    <property type="match status" value="1"/>
</dbReference>
<dbReference type="PANTHER" id="PTHR11444:SF22">
    <property type="entry name" value="FUMARATE HYDRATASE CLASS II"/>
    <property type="match status" value="1"/>
</dbReference>
<dbReference type="Pfam" id="PF10415">
    <property type="entry name" value="FumaraseC_C"/>
    <property type="match status" value="1"/>
</dbReference>
<dbReference type="Pfam" id="PF00206">
    <property type="entry name" value="Lyase_1"/>
    <property type="match status" value="1"/>
</dbReference>
<dbReference type="PRINTS" id="PR00145">
    <property type="entry name" value="ARGSUCLYASE"/>
</dbReference>
<dbReference type="PRINTS" id="PR00149">
    <property type="entry name" value="FUMRATELYASE"/>
</dbReference>
<dbReference type="SUPFAM" id="SSF48557">
    <property type="entry name" value="L-aspartase-like"/>
    <property type="match status" value="1"/>
</dbReference>
<dbReference type="PROSITE" id="PS00163">
    <property type="entry name" value="FUMARATE_LYASES"/>
    <property type="match status" value="1"/>
</dbReference>
<reference key="1">
    <citation type="submission" date="1996-05" db="EMBL/GenBank/DDBJ databases">
        <authorList>
            <person name="Hassett D.J."/>
            <person name="Klotz M.G."/>
            <person name="Howell M.L."/>
        </authorList>
    </citation>
    <scope>NUCLEOTIDE SEQUENCE [GENOMIC DNA]</scope>
    <source>
        <strain>FRD1</strain>
    </source>
</reference>
<reference key="2">
    <citation type="journal article" date="1996" name="Biochem. Biophys. Res. Commun.">
        <title>The Pseudomonas aeruginosa fumC and sodA genes belong to an iron-responsive operon.</title>
        <authorList>
            <person name="Polack B."/>
            <person name="Dacheux D."/>
            <person name="Delic-Attree I."/>
            <person name="Toussaint B."/>
            <person name="Vignais P.M."/>
        </authorList>
    </citation>
    <scope>NUCLEOTIDE SEQUENCE [GENOMIC DNA]</scope>
    <scope>FUNCTION</scope>
    <scope>CATALYTIC ACTIVITY</scope>
    <scope>INDUCTION</scope>
    <source>
        <strain>CHA</strain>
    </source>
</reference>
<reference key="3">
    <citation type="journal article" date="2000" name="Nature">
        <title>Complete genome sequence of Pseudomonas aeruginosa PAO1, an opportunistic pathogen.</title>
        <authorList>
            <person name="Stover C.K."/>
            <person name="Pham X.-Q.T."/>
            <person name="Erwin A.L."/>
            <person name="Mizoguchi S.D."/>
            <person name="Warrener P."/>
            <person name="Hickey M.J."/>
            <person name="Brinkman F.S.L."/>
            <person name="Hufnagle W.O."/>
            <person name="Kowalik D.J."/>
            <person name="Lagrou M."/>
            <person name="Garber R.L."/>
            <person name="Goltry L."/>
            <person name="Tolentino E."/>
            <person name="Westbrock-Wadman S."/>
            <person name="Yuan Y."/>
            <person name="Brody L.L."/>
            <person name="Coulter S.N."/>
            <person name="Folger K.R."/>
            <person name="Kas A."/>
            <person name="Larbig K."/>
            <person name="Lim R.M."/>
            <person name="Smith K.A."/>
            <person name="Spencer D.H."/>
            <person name="Wong G.K.-S."/>
            <person name="Wu Z."/>
            <person name="Paulsen I.T."/>
            <person name="Reizer J."/>
            <person name="Saier M.H. Jr."/>
            <person name="Hancock R.E.W."/>
            <person name="Lory S."/>
            <person name="Olson M.V."/>
        </authorList>
    </citation>
    <scope>NUCLEOTIDE SEQUENCE [LARGE SCALE GENOMIC DNA]</scope>
    <source>
        <strain>ATCC 15692 / DSM 22644 / CIP 104116 / JCM 14847 / LMG 12228 / 1C / PRS 101 / PAO1</strain>
    </source>
</reference>
<evidence type="ECO:0000255" key="1">
    <source>
        <dbReference type="HAMAP-Rule" id="MF_00743"/>
    </source>
</evidence>
<evidence type="ECO:0000269" key="2">
    <source>
    </source>
</evidence>
<evidence type="ECO:0000303" key="3">
    <source ref="1"/>
</evidence>
<evidence type="ECO:0000305" key="4"/>
<feature type="chain" id="PRO_0000161299" description="Fumarate hydratase class II 2">
    <location>
        <begin position="1"/>
        <end position="458"/>
    </location>
</feature>
<feature type="active site" description="Proton donor/acceptor" evidence="1">
    <location>
        <position position="182"/>
    </location>
</feature>
<feature type="active site" evidence="1">
    <location>
        <position position="312"/>
    </location>
</feature>
<feature type="binding site" evidence="1">
    <location>
        <begin position="98"/>
        <end position="100"/>
    </location>
    <ligand>
        <name>substrate</name>
    </ligand>
</feature>
<feature type="binding site" description="in site B" evidence="1">
    <location>
        <begin position="123"/>
        <end position="126"/>
    </location>
    <ligand>
        <name>substrate</name>
    </ligand>
</feature>
<feature type="binding site" evidence="1">
    <location>
        <begin position="133"/>
        <end position="135"/>
    </location>
    <ligand>
        <name>substrate</name>
    </ligand>
</feature>
<feature type="binding site" evidence="1">
    <location>
        <position position="181"/>
    </location>
    <ligand>
        <name>substrate</name>
    </ligand>
</feature>
<feature type="binding site" evidence="1">
    <location>
        <position position="313"/>
    </location>
    <ligand>
        <name>substrate</name>
    </ligand>
</feature>
<feature type="binding site" evidence="1">
    <location>
        <begin position="318"/>
        <end position="320"/>
    </location>
    <ligand>
        <name>substrate</name>
    </ligand>
</feature>
<feature type="site" description="Important for catalytic activity" evidence="1">
    <location>
        <position position="325"/>
    </location>
</feature>
<feature type="sequence conflict" description="In Ref. 2; AAB17389." evidence="4" ref="2">
    <original>P</original>
    <variation>S</variation>
    <location>
        <position position="156"/>
    </location>
</feature>
<feature type="sequence conflict" description="In Ref. 2; AAB17389." evidence="4" ref="2">
    <original>G</original>
    <variation>A</variation>
    <location>
        <position position="222"/>
    </location>
</feature>
<feature type="sequence conflict" description="In Ref. 2; AAB17389." evidence="4" ref="2">
    <original>A</original>
    <variation>G</variation>
    <location>
        <position position="331"/>
    </location>
</feature>
<feature type="sequence conflict" description="In Ref. 2; AAB17389." evidence="4" ref="2">
    <location>
        <position position="340"/>
    </location>
</feature>
<feature type="sequence conflict" description="In Ref. 2; AAB17389." evidence="4" ref="2">
    <original>N</original>
    <variation>T</variation>
    <location>
        <position position="362"/>
    </location>
</feature>
<accession>Q51404</accession>
<accession>P72168</accession>
<sequence>MTDTRIERDSMGELAVPATALYGAQTQRAVNNFPVSGQRMPQAFVRALLLAKAAAARANVSLQQLDAPMGEAIADTCLQLLQEDFMQHFPVDVFQTGSGTSSNMNANEVVATLASRRLGGKVNPNDHVNCGQSSNDIIPSTIHISAALEISERLLPALRHLEQTIQSKAGEVHAYVKTGRTHLMDAMPVRMSQVLGGWAQQVRQAGVHIESVLPALQQLAQGGTAVGTGINAHPRFAERFSQELNDLTGLAFRPGDDFFALIGSQDTAVAASGQLKTLAVTLMKLANDLRWMNSGPLAGLGEIELEALQPGSSIMPGKVNPVIPEATAMVAAQVIGNDAAIAVAGQSGNFELNVMLPLVADNLLHSIQLLANVSRLLADKAIASFKVNQGKLSEALARNPILVTALNPIIGYQKAAEIAKQAYREGRPIIDVALENTDLDRARLEVLLDPEKLTAGGL</sequence>
<proteinExistence type="evidence at protein level"/>
<keyword id="KW-0963">Cytoplasm</keyword>
<keyword id="KW-0456">Lyase</keyword>
<keyword id="KW-1185">Reference proteome</keyword>
<keyword id="KW-0816">Tricarboxylic acid cycle</keyword>
<comment type="function">
    <text evidence="1 2">Involved in the TCA cycle. Catalyzes the stereospecific interconversion of fumarate to L-malate.</text>
</comment>
<comment type="catalytic activity">
    <reaction evidence="1 2">
        <text>(S)-malate = fumarate + H2O</text>
        <dbReference type="Rhea" id="RHEA:12460"/>
        <dbReference type="ChEBI" id="CHEBI:15377"/>
        <dbReference type="ChEBI" id="CHEBI:15589"/>
        <dbReference type="ChEBI" id="CHEBI:29806"/>
        <dbReference type="EC" id="4.2.1.2"/>
    </reaction>
</comment>
<comment type="pathway">
    <text evidence="1">Carbohydrate metabolism; tricarboxylic acid cycle; (S)-malate from fumarate: step 1/1.</text>
</comment>
<comment type="subunit">
    <text evidence="1">Homotetramer.</text>
</comment>
<comment type="subcellular location">
    <subcellularLocation>
        <location evidence="1">Cytoplasm</location>
    </subcellularLocation>
</comment>
<comment type="induction">
    <text evidence="2">Part of the fumC-PA4469-sodA operon which is repressed by iron (at protein level).</text>
</comment>
<comment type="miscellaneous">
    <text evidence="1">There are 2 substrate-binding sites: the catalytic A site, and the non-catalytic B site that may play a role in the transfer of substrate or product between the active site and the solvent. Alternatively, the B site may bind allosteric effectors.</text>
</comment>
<comment type="similarity">
    <text evidence="1">Belongs to the class-II fumarase/aspartase family. Fumarase subfamily.</text>
</comment>
<comment type="sequence caution" evidence="4">
    <conflict type="erroneous initiation">
        <sequence resource="EMBL-CDS" id="AAB17389"/>
    </conflict>
    <text>Truncated N-terminus.</text>
</comment>
<name>FUMC2_PSEAE</name>
<gene>
    <name evidence="1 3" type="primary">fumC2</name>
    <name type="ordered locus">PA4470</name>
</gene>
<protein>
    <recommendedName>
        <fullName evidence="1">Fumarate hydratase class II 2</fullName>
        <shortName evidence="1">Fumarase C 2</shortName>
        <ecNumber evidence="1 2">4.2.1.2</ecNumber>
    </recommendedName>
    <alternativeName>
        <fullName evidence="1">Aerobic fumarase 2</fullName>
    </alternativeName>
    <alternativeName>
        <fullName evidence="1">Iron-independent fumarase 2</fullName>
    </alternativeName>
</protein>